<gene>
    <name evidence="1" type="primary">lolD2</name>
    <name type="ordered locus">Cag_0979</name>
</gene>
<feature type="chain" id="PRO_0000272070" description="Lipoprotein-releasing system ATP-binding protein LolD 2">
    <location>
        <begin position="1"/>
        <end position="241"/>
    </location>
</feature>
<feature type="domain" description="ABC transporter" evidence="1">
    <location>
        <begin position="6"/>
        <end position="241"/>
    </location>
</feature>
<feature type="binding site" evidence="1">
    <location>
        <begin position="43"/>
        <end position="50"/>
    </location>
    <ligand>
        <name>ATP</name>
        <dbReference type="ChEBI" id="CHEBI:30616"/>
    </ligand>
</feature>
<sequence>MIITMLDAQQLSKSYTLAGKRTINILQGVTLRVHEGEMVTIVGASGSGKTTLLNLLGTLDTPDSGTIVFNNQPLFQNNRYTLSRKALAAFRNRQIGFVFQFHHLLSDFTALENVAMAEFIATGNLQAAKVRAAELLTNFGLSERLDHLPSELSGGEQQRVAIARALMNNPKLVLADEPSGNLDQRNSQLLYELMARISKEQRTAFIIVTHNYDYAAMADRCFCMENGLLGEYKSYEKSTAV</sequence>
<accession>Q3ARY3</accession>
<reference key="1">
    <citation type="submission" date="2005-08" db="EMBL/GenBank/DDBJ databases">
        <title>Complete sequence of Chlorobium chlorochromatii CaD3.</title>
        <authorList>
            <consortium name="US DOE Joint Genome Institute"/>
            <person name="Copeland A."/>
            <person name="Lucas S."/>
            <person name="Lapidus A."/>
            <person name="Barry K."/>
            <person name="Detter J.C."/>
            <person name="Glavina T."/>
            <person name="Hammon N."/>
            <person name="Israni S."/>
            <person name="Pitluck S."/>
            <person name="Bryant D."/>
            <person name="Schmutz J."/>
            <person name="Larimer F."/>
            <person name="Land M."/>
            <person name="Kyrpides N."/>
            <person name="Ivanova N."/>
            <person name="Richardson P."/>
        </authorList>
    </citation>
    <scope>NUCLEOTIDE SEQUENCE [LARGE SCALE GENOMIC DNA]</scope>
    <source>
        <strain>CaD3</strain>
    </source>
</reference>
<proteinExistence type="inferred from homology"/>
<comment type="function">
    <text evidence="1">Part of the ABC transporter complex LolCDE involved in the translocation of mature outer membrane-directed lipoproteins, from the inner membrane to the periplasmic chaperone, LolA. Responsible for the formation of the LolA-lipoprotein complex in an ATP-dependent manner.</text>
</comment>
<comment type="subunit">
    <text evidence="1">The complex is composed of two ATP-binding proteins (LolD) and two transmembrane proteins (LolC and LolE).</text>
</comment>
<comment type="subcellular location">
    <subcellularLocation>
        <location evidence="1">Cell inner membrane</location>
        <topology evidence="1">Peripheral membrane protein</topology>
    </subcellularLocation>
</comment>
<comment type="similarity">
    <text evidence="1">Belongs to the ABC transporter superfamily. Lipoprotein translocase (TC 3.A.1.125) family.</text>
</comment>
<keyword id="KW-0067">ATP-binding</keyword>
<keyword id="KW-0997">Cell inner membrane</keyword>
<keyword id="KW-1003">Cell membrane</keyword>
<keyword id="KW-0472">Membrane</keyword>
<keyword id="KW-0547">Nucleotide-binding</keyword>
<keyword id="KW-1278">Translocase</keyword>
<keyword id="KW-0813">Transport</keyword>
<organism>
    <name type="scientific">Chlorobium chlorochromatii (strain CaD3)</name>
    <dbReference type="NCBI Taxonomy" id="340177"/>
    <lineage>
        <taxon>Bacteria</taxon>
        <taxon>Pseudomonadati</taxon>
        <taxon>Chlorobiota</taxon>
        <taxon>Chlorobiia</taxon>
        <taxon>Chlorobiales</taxon>
        <taxon>Chlorobiaceae</taxon>
        <taxon>Chlorobium/Pelodictyon group</taxon>
        <taxon>Chlorobium</taxon>
    </lineage>
</organism>
<dbReference type="EC" id="7.6.2.-" evidence="1"/>
<dbReference type="EMBL" id="CP000108">
    <property type="protein sequence ID" value="ABB28242.1"/>
    <property type="molecule type" value="Genomic_DNA"/>
</dbReference>
<dbReference type="SMR" id="Q3ARY3"/>
<dbReference type="STRING" id="340177.Cag_0979"/>
<dbReference type="KEGG" id="cch:Cag_0979"/>
<dbReference type="eggNOG" id="COG1136">
    <property type="taxonomic scope" value="Bacteria"/>
</dbReference>
<dbReference type="HOGENOM" id="CLU_000604_1_22_10"/>
<dbReference type="OrthoDB" id="9769100at2"/>
<dbReference type="GO" id="GO:0005886">
    <property type="term" value="C:plasma membrane"/>
    <property type="evidence" value="ECO:0007669"/>
    <property type="project" value="UniProtKB-SubCell"/>
</dbReference>
<dbReference type="GO" id="GO:0005524">
    <property type="term" value="F:ATP binding"/>
    <property type="evidence" value="ECO:0007669"/>
    <property type="project" value="UniProtKB-KW"/>
</dbReference>
<dbReference type="GO" id="GO:0016887">
    <property type="term" value="F:ATP hydrolysis activity"/>
    <property type="evidence" value="ECO:0007669"/>
    <property type="project" value="InterPro"/>
</dbReference>
<dbReference type="GO" id="GO:0022857">
    <property type="term" value="F:transmembrane transporter activity"/>
    <property type="evidence" value="ECO:0007669"/>
    <property type="project" value="TreeGrafter"/>
</dbReference>
<dbReference type="CDD" id="cd03255">
    <property type="entry name" value="ABC_MJ0796_LolCDE_FtsE"/>
    <property type="match status" value="1"/>
</dbReference>
<dbReference type="FunFam" id="3.40.50.300:FF:000032">
    <property type="entry name" value="Export ABC transporter ATP-binding protein"/>
    <property type="match status" value="1"/>
</dbReference>
<dbReference type="Gene3D" id="3.40.50.300">
    <property type="entry name" value="P-loop containing nucleotide triphosphate hydrolases"/>
    <property type="match status" value="1"/>
</dbReference>
<dbReference type="InterPro" id="IPR003593">
    <property type="entry name" value="AAA+_ATPase"/>
</dbReference>
<dbReference type="InterPro" id="IPR003439">
    <property type="entry name" value="ABC_transporter-like_ATP-bd"/>
</dbReference>
<dbReference type="InterPro" id="IPR017871">
    <property type="entry name" value="ABC_transporter-like_CS"/>
</dbReference>
<dbReference type="InterPro" id="IPR015854">
    <property type="entry name" value="ABC_transpr_LolD-like"/>
</dbReference>
<dbReference type="InterPro" id="IPR017911">
    <property type="entry name" value="MacB-like_ATP-bd"/>
</dbReference>
<dbReference type="InterPro" id="IPR027417">
    <property type="entry name" value="P-loop_NTPase"/>
</dbReference>
<dbReference type="PANTHER" id="PTHR24220">
    <property type="entry name" value="IMPORT ATP-BINDING PROTEIN"/>
    <property type="match status" value="1"/>
</dbReference>
<dbReference type="PANTHER" id="PTHR24220:SF689">
    <property type="entry name" value="LIPOPROTEIN-RELEASING SYSTEM ATP-BINDING PROTEIN LOLD"/>
    <property type="match status" value="1"/>
</dbReference>
<dbReference type="Pfam" id="PF00005">
    <property type="entry name" value="ABC_tran"/>
    <property type="match status" value="1"/>
</dbReference>
<dbReference type="SMART" id="SM00382">
    <property type="entry name" value="AAA"/>
    <property type="match status" value="1"/>
</dbReference>
<dbReference type="SUPFAM" id="SSF52540">
    <property type="entry name" value="P-loop containing nucleoside triphosphate hydrolases"/>
    <property type="match status" value="1"/>
</dbReference>
<dbReference type="PROSITE" id="PS00211">
    <property type="entry name" value="ABC_TRANSPORTER_1"/>
    <property type="match status" value="1"/>
</dbReference>
<dbReference type="PROSITE" id="PS50893">
    <property type="entry name" value="ABC_TRANSPORTER_2"/>
    <property type="match status" value="1"/>
</dbReference>
<dbReference type="PROSITE" id="PS51244">
    <property type="entry name" value="LOLD"/>
    <property type="match status" value="1"/>
</dbReference>
<evidence type="ECO:0000255" key="1">
    <source>
        <dbReference type="HAMAP-Rule" id="MF_01708"/>
    </source>
</evidence>
<protein>
    <recommendedName>
        <fullName evidence="1">Lipoprotein-releasing system ATP-binding protein LolD 2</fullName>
        <ecNumber evidence="1">7.6.2.-</ecNumber>
    </recommendedName>
</protein>
<name>LOLD2_CHLCH</name>